<sequence>MMKMRWLGAAIMLTLYASSSWAFSIDDVAKQAQSLAGKGYEAPKSNLPSVFRDMKYADYQQIQFNSDKAYWNNLKTPFKLEFYHQGMYFDTPVKINEVTATTVKRIKYSPDYFNFGNVQHDKDTVKDLGFAGFKVLYPINSKDKNDEIVSMLGASYFRVIGAGQVYGLSARGLAIDTALPSGEEFPRFREFWIERPKPTDKRLTVYALLDSPRATGAYRFVIIPGRDTVVDVQSKVYLRDKVGKLGVAPLTSMFLFGPNQPSPTTNYRPELHDSNGLSIHAGNGEWIWRPLNNPKHLAVSSYAMENPQGFGLLQRGREFSRFEDLDDRYDLRPSAWITPKGDWGKGKVELVEIPTNDETNDNIVAYWTPDQLPEPGKEMNFKYTLTFSRDEDKLHAPDNAWVLQTRRSTGDVKQSNLIRQPDGTIAFVVDFVGADMKKLPPDTPVAAQTSIGDNGEIVDSNVRYNPVTKGWRLMLRVKVKDAKKTTEMRAALVNADQTLSETWSYQLPANE</sequence>
<dbReference type="EMBL" id="AL513382">
    <property type="protein sequence ID" value="CAD08274.1"/>
    <property type="molecule type" value="Genomic_DNA"/>
</dbReference>
<dbReference type="EMBL" id="AE014613">
    <property type="protein sequence ID" value="AAO69393.1"/>
    <property type="molecule type" value="Genomic_DNA"/>
</dbReference>
<dbReference type="RefSeq" id="NP_455644.1">
    <property type="nucleotide sequence ID" value="NC_003198.1"/>
</dbReference>
<dbReference type="RefSeq" id="WP_001562609.1">
    <property type="nucleotide sequence ID" value="NZ_WSUR01000018.1"/>
</dbReference>
<dbReference type="SMR" id="P67558"/>
<dbReference type="STRING" id="220341.gene:17585154"/>
<dbReference type="KEGG" id="stt:t1770"/>
<dbReference type="KEGG" id="sty:STY1187"/>
<dbReference type="PATRIC" id="fig|220341.7.peg.1188"/>
<dbReference type="eggNOG" id="COG3131">
    <property type="taxonomic scope" value="Bacteria"/>
</dbReference>
<dbReference type="HOGENOM" id="CLU_023403_2_0_6"/>
<dbReference type="OMA" id="AYRFVIM"/>
<dbReference type="OrthoDB" id="335750at2"/>
<dbReference type="UniPathway" id="UPA00637"/>
<dbReference type="Proteomes" id="UP000000541">
    <property type="component" value="Chromosome"/>
</dbReference>
<dbReference type="Proteomes" id="UP000002670">
    <property type="component" value="Chromosome"/>
</dbReference>
<dbReference type="GO" id="GO:0030288">
    <property type="term" value="C:outer membrane-bounded periplasmic space"/>
    <property type="evidence" value="ECO:0007669"/>
    <property type="project" value="TreeGrafter"/>
</dbReference>
<dbReference type="GO" id="GO:0030246">
    <property type="term" value="F:carbohydrate binding"/>
    <property type="evidence" value="ECO:0007669"/>
    <property type="project" value="InterPro"/>
</dbReference>
<dbReference type="GO" id="GO:0003824">
    <property type="term" value="F:catalytic activity"/>
    <property type="evidence" value="ECO:0007669"/>
    <property type="project" value="InterPro"/>
</dbReference>
<dbReference type="GO" id="GO:0051274">
    <property type="term" value="P:beta-glucan biosynthetic process"/>
    <property type="evidence" value="ECO:0007669"/>
    <property type="project" value="TreeGrafter"/>
</dbReference>
<dbReference type="FunFam" id="2.60.40.10:FF:000294">
    <property type="entry name" value="Glucans biosynthesis protein G"/>
    <property type="match status" value="1"/>
</dbReference>
<dbReference type="FunFam" id="2.70.98.10:FF:000001">
    <property type="entry name" value="Glucans biosynthesis protein G"/>
    <property type="match status" value="1"/>
</dbReference>
<dbReference type="Gene3D" id="2.70.98.10">
    <property type="match status" value="1"/>
</dbReference>
<dbReference type="Gene3D" id="2.60.40.10">
    <property type="entry name" value="Immunoglobulins"/>
    <property type="match status" value="1"/>
</dbReference>
<dbReference type="HAMAP" id="MF_01069">
    <property type="entry name" value="MdoG_OpgG"/>
    <property type="match status" value="1"/>
</dbReference>
<dbReference type="InterPro" id="IPR011013">
    <property type="entry name" value="Gal_mutarotase_sf_dom"/>
</dbReference>
<dbReference type="InterPro" id="IPR014718">
    <property type="entry name" value="GH-type_carb-bd"/>
</dbReference>
<dbReference type="InterPro" id="IPR014438">
    <property type="entry name" value="Glucan_biosyn_MdoG/MdoD"/>
</dbReference>
<dbReference type="InterPro" id="IPR007444">
    <property type="entry name" value="Glucan_biosyn_MdoG_C"/>
</dbReference>
<dbReference type="InterPro" id="IPR013783">
    <property type="entry name" value="Ig-like_fold"/>
</dbReference>
<dbReference type="InterPro" id="IPR014756">
    <property type="entry name" value="Ig_E-set"/>
</dbReference>
<dbReference type="InterPro" id="IPR023704">
    <property type="entry name" value="MdoG_OpgG"/>
</dbReference>
<dbReference type="PANTHER" id="PTHR30504">
    <property type="entry name" value="GLUCANS BIOSYNTHESIS PROTEIN"/>
    <property type="match status" value="1"/>
</dbReference>
<dbReference type="PANTHER" id="PTHR30504:SF4">
    <property type="entry name" value="GLUCANS BIOSYNTHESIS PROTEIN G"/>
    <property type="match status" value="1"/>
</dbReference>
<dbReference type="Pfam" id="PF04349">
    <property type="entry name" value="MdoG"/>
    <property type="match status" value="1"/>
</dbReference>
<dbReference type="PIRSF" id="PIRSF006281">
    <property type="entry name" value="MdoG"/>
    <property type="match status" value="1"/>
</dbReference>
<dbReference type="SUPFAM" id="SSF81296">
    <property type="entry name" value="E set domains"/>
    <property type="match status" value="1"/>
</dbReference>
<dbReference type="SUPFAM" id="SSF74650">
    <property type="entry name" value="Galactose mutarotase-like"/>
    <property type="match status" value="1"/>
</dbReference>
<protein>
    <recommendedName>
        <fullName>Glucans biosynthesis protein G</fullName>
    </recommendedName>
</protein>
<proteinExistence type="inferred from homology"/>
<organism>
    <name type="scientific">Salmonella typhi</name>
    <dbReference type="NCBI Taxonomy" id="90370"/>
    <lineage>
        <taxon>Bacteria</taxon>
        <taxon>Pseudomonadati</taxon>
        <taxon>Pseudomonadota</taxon>
        <taxon>Gammaproteobacteria</taxon>
        <taxon>Enterobacterales</taxon>
        <taxon>Enterobacteriaceae</taxon>
        <taxon>Salmonella</taxon>
    </lineage>
</organism>
<gene>
    <name type="primary">mdoG</name>
    <name type="synonym">opgG</name>
    <name type="ordered locus">STY1187</name>
    <name type="ordered locus">t1770</name>
</gene>
<accession>P67558</accession>
<accession>Q8XFF6</accession>
<comment type="function">
    <text evidence="1">Involved in the biosynthesis of osmoregulated periplasmic glucans (OPGs).</text>
</comment>
<comment type="pathway">
    <text>Glycan metabolism; osmoregulated periplasmic glucan (OPG) biosynthesis.</text>
</comment>
<comment type="subcellular location">
    <subcellularLocation>
        <location evidence="1">Periplasm</location>
    </subcellularLocation>
</comment>
<comment type="similarity">
    <text evidence="3">Belongs to the OpgD/OpgG family.</text>
</comment>
<evidence type="ECO:0000250" key="1"/>
<evidence type="ECO:0000255" key="2"/>
<evidence type="ECO:0000305" key="3"/>
<feature type="signal peptide" evidence="2">
    <location>
        <begin position="1"/>
        <end position="22"/>
    </location>
</feature>
<feature type="chain" id="PRO_0000020233" description="Glucans biosynthesis protein G">
    <location>
        <begin position="23"/>
        <end position="511"/>
    </location>
</feature>
<name>OPGG_SALTI</name>
<reference key="1">
    <citation type="journal article" date="2001" name="Nature">
        <title>Complete genome sequence of a multiple drug resistant Salmonella enterica serovar Typhi CT18.</title>
        <authorList>
            <person name="Parkhill J."/>
            <person name="Dougan G."/>
            <person name="James K.D."/>
            <person name="Thomson N.R."/>
            <person name="Pickard D."/>
            <person name="Wain J."/>
            <person name="Churcher C.M."/>
            <person name="Mungall K.L."/>
            <person name="Bentley S.D."/>
            <person name="Holden M.T.G."/>
            <person name="Sebaihia M."/>
            <person name="Baker S."/>
            <person name="Basham D."/>
            <person name="Brooks K."/>
            <person name="Chillingworth T."/>
            <person name="Connerton P."/>
            <person name="Cronin A."/>
            <person name="Davis P."/>
            <person name="Davies R.M."/>
            <person name="Dowd L."/>
            <person name="White N."/>
            <person name="Farrar J."/>
            <person name="Feltwell T."/>
            <person name="Hamlin N."/>
            <person name="Haque A."/>
            <person name="Hien T.T."/>
            <person name="Holroyd S."/>
            <person name="Jagels K."/>
            <person name="Krogh A."/>
            <person name="Larsen T.S."/>
            <person name="Leather S."/>
            <person name="Moule S."/>
            <person name="O'Gaora P."/>
            <person name="Parry C."/>
            <person name="Quail M.A."/>
            <person name="Rutherford K.M."/>
            <person name="Simmonds M."/>
            <person name="Skelton J."/>
            <person name="Stevens K."/>
            <person name="Whitehead S."/>
            <person name="Barrell B.G."/>
        </authorList>
    </citation>
    <scope>NUCLEOTIDE SEQUENCE [LARGE SCALE GENOMIC DNA]</scope>
    <source>
        <strain>CT18</strain>
    </source>
</reference>
<reference key="2">
    <citation type="journal article" date="2003" name="J. Bacteriol.">
        <title>Comparative genomics of Salmonella enterica serovar Typhi strains Ty2 and CT18.</title>
        <authorList>
            <person name="Deng W."/>
            <person name="Liou S.-R."/>
            <person name="Plunkett G. III"/>
            <person name="Mayhew G.F."/>
            <person name="Rose D.J."/>
            <person name="Burland V."/>
            <person name="Kodoyianni V."/>
            <person name="Schwartz D.C."/>
            <person name="Blattner F.R."/>
        </authorList>
    </citation>
    <scope>NUCLEOTIDE SEQUENCE [LARGE SCALE GENOMIC DNA]</scope>
    <source>
        <strain>ATCC 700931 / Ty2</strain>
    </source>
</reference>
<keyword id="KW-0574">Periplasm</keyword>
<keyword id="KW-0732">Signal</keyword>